<sequence length="119" mass="13333">MAFKDTGKTPVEPEVAIHRIRITLTSRNVKSLEKVCADLIRGAKEKNLKVKGPVRMPTKTLRITTRKTPCGEGSKTWDRFQMRIPKRLIDLHSPSEIVKQITSISIEPGVEVEVTIADA</sequence>
<feature type="initiator methionine" description="Removed" evidence="1">
    <location>
        <position position="1"/>
    </location>
</feature>
<feature type="chain" id="PRO_0000319320" description="Small ribosomal subunit protein uS10">
    <location>
        <begin position="2"/>
        <end position="119"/>
    </location>
</feature>
<feature type="modified residue" description="N-acetylalanine" evidence="1">
    <location>
        <position position="2"/>
    </location>
</feature>
<feature type="modified residue" description="N6-succinyllysine; alternate" evidence="2">
    <location>
        <position position="8"/>
    </location>
</feature>
<feature type="modified residue" description="Phosphothreonine" evidence="1">
    <location>
        <position position="9"/>
    </location>
</feature>
<feature type="modified residue" description="N6-acetyllysine" evidence="2">
    <location>
        <position position="34"/>
    </location>
</feature>
<feature type="modified residue" description="N6-acetyllysine" evidence="2">
    <location>
        <position position="75"/>
    </location>
</feature>
<feature type="modified residue" description="Phosphoserine" evidence="1">
    <location>
        <position position="93"/>
    </location>
</feature>
<feature type="cross-link" description="Glycyl lysine isopeptide (Lys-Gly) (interchain with G-Cter in ubiquitin)" evidence="1">
    <location>
        <position position="4"/>
    </location>
</feature>
<feature type="cross-link" description="Glycyl lysine isopeptide (Lys-Gly) (interchain with G-Cter in ubiquitin); alternate" evidence="1">
    <location>
        <position position="8"/>
    </location>
</feature>
<accession>A1XQU9</accession>
<protein>
    <recommendedName>
        <fullName evidence="3">Small ribosomal subunit protein uS10</fullName>
    </recommendedName>
    <alternativeName>
        <fullName>40S ribosomal protein S20</fullName>
    </alternativeName>
</protein>
<proteinExistence type="evidence at protein level"/>
<reference key="1">
    <citation type="submission" date="2006-05" db="EMBL/GenBank/DDBJ databases">
        <title>Generation and analysis of cDNA sequences derived from a porcine skeletal muscle library.</title>
        <authorList>
            <person name="Cai G."/>
            <person name="Chen Y."/>
            <person name="Wang C."/>
            <person name="Li J."/>
            <person name="Peng G."/>
            <person name="Zhang H."/>
        </authorList>
    </citation>
    <scope>NUCLEOTIDE SEQUENCE [LARGE SCALE MRNA]</scope>
    <source>
        <tissue>Longissimus dorsi muscle</tissue>
    </source>
</reference>
<comment type="function">
    <text evidence="1">Component of the small ribosomal subunit. The ribosome is a large ribonucleoprotein complex responsible for the synthesis of proteins in the cell.</text>
</comment>
<comment type="subunit">
    <text evidence="1">Component of the 40S small ribosomal subunit.</text>
</comment>
<comment type="subcellular location">
    <subcellularLocation>
        <location evidence="1">Cytoplasm</location>
    </subcellularLocation>
</comment>
<comment type="PTM">
    <text evidence="1">Polyubiquitinated by ZNF598 via 'Lys-63'-linked ubiquitin chains when a ribosome has stalled, initiating the ribosome quality control (RQC) pathway to degrade the potentially detrimental aberrant nascent polypeptide. Deubiquitinated by OTUD3 and USP21, antagonizing ZNF598 activity.</text>
</comment>
<comment type="PTM">
    <text evidence="2">Ufmylated by UFL1.</text>
</comment>
<comment type="similarity">
    <text evidence="3">Belongs to the universal ribosomal protein uS10 family.</text>
</comment>
<dbReference type="EMBL" id="DQ629171">
    <property type="protein sequence ID" value="ABK55655.1"/>
    <property type="molecule type" value="mRNA"/>
</dbReference>
<dbReference type="RefSeq" id="NP_001123426.1">
    <property type="nucleotide sequence ID" value="NM_001129954.1"/>
</dbReference>
<dbReference type="PDB" id="3J7P">
    <property type="method" value="EM"/>
    <property type="resolution" value="3.50 A"/>
    <property type="chains" value="SU=1-119"/>
</dbReference>
<dbReference type="PDB" id="3J7R">
    <property type="method" value="EM"/>
    <property type="resolution" value="3.90 A"/>
    <property type="chains" value="SU=1-119"/>
</dbReference>
<dbReference type="PDBsum" id="3J7P"/>
<dbReference type="PDBsum" id="3J7R"/>
<dbReference type="SMR" id="A1XQU9"/>
<dbReference type="FunCoup" id="A1XQU9">
    <property type="interactions" value="346"/>
</dbReference>
<dbReference type="STRING" id="9823.ENSSSCP00000058493"/>
<dbReference type="PaxDb" id="9823-ENSSSCP00000006662"/>
<dbReference type="PeptideAtlas" id="A1XQU9"/>
<dbReference type="GeneID" id="414395"/>
<dbReference type="KEGG" id="ssc:414395"/>
<dbReference type="CTD" id="6224"/>
<dbReference type="eggNOG" id="KOG0900">
    <property type="taxonomic scope" value="Eukaryota"/>
</dbReference>
<dbReference type="InParanoid" id="A1XQU9"/>
<dbReference type="OrthoDB" id="10248551at2759"/>
<dbReference type="Proteomes" id="UP000008227">
    <property type="component" value="Unplaced"/>
</dbReference>
<dbReference type="Proteomes" id="UP000314985">
    <property type="component" value="Unplaced"/>
</dbReference>
<dbReference type="Proteomes" id="UP000694570">
    <property type="component" value="Unplaced"/>
</dbReference>
<dbReference type="Proteomes" id="UP000694571">
    <property type="component" value="Unplaced"/>
</dbReference>
<dbReference type="Proteomes" id="UP000694720">
    <property type="component" value="Unplaced"/>
</dbReference>
<dbReference type="Proteomes" id="UP000694722">
    <property type="component" value="Unplaced"/>
</dbReference>
<dbReference type="Proteomes" id="UP000694723">
    <property type="component" value="Unplaced"/>
</dbReference>
<dbReference type="Proteomes" id="UP000694724">
    <property type="component" value="Unplaced"/>
</dbReference>
<dbReference type="Proteomes" id="UP000694725">
    <property type="component" value="Unplaced"/>
</dbReference>
<dbReference type="Proteomes" id="UP000694726">
    <property type="component" value="Unplaced"/>
</dbReference>
<dbReference type="Proteomes" id="UP000694727">
    <property type="component" value="Unplaced"/>
</dbReference>
<dbReference type="Proteomes" id="UP000694728">
    <property type="component" value="Unplaced"/>
</dbReference>
<dbReference type="GO" id="GO:0098556">
    <property type="term" value="C:cytoplasmic side of rough endoplasmic reticulum membrane"/>
    <property type="evidence" value="ECO:0000314"/>
    <property type="project" value="UniProtKB"/>
</dbReference>
<dbReference type="GO" id="GO:0022627">
    <property type="term" value="C:cytosolic small ribosomal subunit"/>
    <property type="evidence" value="ECO:0000314"/>
    <property type="project" value="UniProtKB"/>
</dbReference>
<dbReference type="GO" id="GO:0003723">
    <property type="term" value="F:RNA binding"/>
    <property type="evidence" value="ECO:0007669"/>
    <property type="project" value="InterPro"/>
</dbReference>
<dbReference type="GO" id="GO:0003735">
    <property type="term" value="F:structural constituent of ribosome"/>
    <property type="evidence" value="ECO:0000318"/>
    <property type="project" value="GO_Central"/>
</dbReference>
<dbReference type="GO" id="GO:0006412">
    <property type="term" value="P:translation"/>
    <property type="evidence" value="ECO:0007669"/>
    <property type="project" value="InterPro"/>
</dbReference>
<dbReference type="FunFam" id="3.30.70.600:FF:000011">
    <property type="entry name" value="Uncharacterized protein"/>
    <property type="match status" value="1"/>
</dbReference>
<dbReference type="Gene3D" id="3.30.70.600">
    <property type="entry name" value="Ribosomal protein S10 domain"/>
    <property type="match status" value="1"/>
</dbReference>
<dbReference type="HAMAP" id="MF_00508">
    <property type="entry name" value="Ribosomal_uS10"/>
    <property type="match status" value="1"/>
</dbReference>
<dbReference type="InterPro" id="IPR001848">
    <property type="entry name" value="Ribosomal_uS10"/>
</dbReference>
<dbReference type="InterPro" id="IPR018268">
    <property type="entry name" value="Ribosomal_uS10_CS"/>
</dbReference>
<dbReference type="InterPro" id="IPR027486">
    <property type="entry name" value="Ribosomal_uS10_dom"/>
</dbReference>
<dbReference type="InterPro" id="IPR036838">
    <property type="entry name" value="Ribosomal_uS10_dom_sf"/>
</dbReference>
<dbReference type="InterPro" id="IPR005729">
    <property type="entry name" value="Ribosomal_uS10_euk/arc"/>
</dbReference>
<dbReference type="NCBIfam" id="TIGR01046">
    <property type="entry name" value="uS10_euk_arch"/>
    <property type="match status" value="1"/>
</dbReference>
<dbReference type="PANTHER" id="PTHR11700">
    <property type="entry name" value="30S RIBOSOMAL PROTEIN S10 FAMILY MEMBER"/>
    <property type="match status" value="1"/>
</dbReference>
<dbReference type="Pfam" id="PF00338">
    <property type="entry name" value="Ribosomal_S10"/>
    <property type="match status" value="1"/>
</dbReference>
<dbReference type="PRINTS" id="PR00971">
    <property type="entry name" value="RIBOSOMALS10"/>
</dbReference>
<dbReference type="SMART" id="SM01403">
    <property type="entry name" value="Ribosomal_S10"/>
    <property type="match status" value="1"/>
</dbReference>
<dbReference type="SUPFAM" id="SSF54999">
    <property type="entry name" value="Ribosomal protein S10"/>
    <property type="match status" value="1"/>
</dbReference>
<dbReference type="PROSITE" id="PS00361">
    <property type="entry name" value="RIBOSOMAL_S10"/>
    <property type="match status" value="1"/>
</dbReference>
<organism>
    <name type="scientific">Sus scrofa</name>
    <name type="common">Pig</name>
    <dbReference type="NCBI Taxonomy" id="9823"/>
    <lineage>
        <taxon>Eukaryota</taxon>
        <taxon>Metazoa</taxon>
        <taxon>Chordata</taxon>
        <taxon>Craniata</taxon>
        <taxon>Vertebrata</taxon>
        <taxon>Euteleostomi</taxon>
        <taxon>Mammalia</taxon>
        <taxon>Eutheria</taxon>
        <taxon>Laurasiatheria</taxon>
        <taxon>Artiodactyla</taxon>
        <taxon>Suina</taxon>
        <taxon>Suidae</taxon>
        <taxon>Sus</taxon>
    </lineage>
</organism>
<name>RS20_PIG</name>
<evidence type="ECO:0000250" key="1">
    <source>
        <dbReference type="UniProtKB" id="P60866"/>
    </source>
</evidence>
<evidence type="ECO:0000250" key="2">
    <source>
        <dbReference type="UniProtKB" id="P60867"/>
    </source>
</evidence>
<evidence type="ECO:0000305" key="3"/>
<gene>
    <name type="primary">RPS20</name>
</gene>
<keyword id="KW-0002">3D-structure</keyword>
<keyword id="KW-0007">Acetylation</keyword>
<keyword id="KW-0963">Cytoplasm</keyword>
<keyword id="KW-1017">Isopeptide bond</keyword>
<keyword id="KW-0597">Phosphoprotein</keyword>
<keyword id="KW-1185">Reference proteome</keyword>
<keyword id="KW-0687">Ribonucleoprotein</keyword>
<keyword id="KW-0689">Ribosomal protein</keyword>
<keyword id="KW-0832">Ubl conjugation</keyword>